<organism>
    <name type="scientific">Pseudomonas sp. (strain PG2982)</name>
    <dbReference type="NCBI Taxonomy" id="308"/>
    <lineage>
        <taxon>Bacteria</taxon>
        <taxon>Pseudomonadati</taxon>
        <taxon>Pseudomonadota</taxon>
    </lineage>
</organism>
<proteinExistence type="evidence at protein level"/>
<sequence length="449" mass="47297">MSHSASPKPATARRSEALTGEIRIPGDKSISHRSFMFGGLASGETRITGLLEGEDVINTGRAMQAMGAKIRKEGDVWIINGVGNGCLLQPEAALDFGNAGTGARLTMGLVGTYDMKTSFIGDASLSKRPMGRVLNPLREMGVQVEAADGDRMPLTLIGPKTANPITYRVPMASAQVKSAVLLAGLNTPGVTTVIEPVMTRDHTEKMLQGFGADLTVETDKDGVRHIRITGQGKLVGQTIDVPGDPSSTAFPLVAALLVEGSDVTIRNVLMNPTRTGLILTLQEMGADIEVLNARLAGGEDVADLRVRASKLKGVVVPPERAPSMIDEYPVLAIAASFAEGETVMDGLDELRVKESDRLAAVARGLEANGVDCTEGEMSLTVRGRPDGKGLGGGTVATHLDHRIAMSFLVMGLAAEKPVTVDDSNMIATSFPEFMDMMPGLGAKIELSIL</sequence>
<comment type="function">
    <text evidence="1">Catalyzes the transfer of the enolpyruvyl moiety of phosphoenolpyruvate (PEP) to the 5-hydroxyl of shikimate-3-phosphate (S3P) to produce enolpyruvyl shikimate-3-phosphate and inorganic phosphate.</text>
</comment>
<comment type="catalytic activity">
    <reaction evidence="1">
        <text>3-phosphoshikimate + phosphoenolpyruvate = 5-O-(1-carboxyvinyl)-3-phosphoshikimate + phosphate</text>
        <dbReference type="Rhea" id="RHEA:21256"/>
        <dbReference type="ChEBI" id="CHEBI:43474"/>
        <dbReference type="ChEBI" id="CHEBI:57701"/>
        <dbReference type="ChEBI" id="CHEBI:58702"/>
        <dbReference type="ChEBI" id="CHEBI:145989"/>
        <dbReference type="EC" id="2.5.1.19"/>
    </reaction>
    <physiologicalReaction direction="left-to-right" evidence="1">
        <dbReference type="Rhea" id="RHEA:21257"/>
    </physiologicalReaction>
</comment>
<comment type="pathway">
    <text evidence="1">Metabolic intermediate biosynthesis; chorismate biosynthesis; chorismate from D-erythrose 4-phosphate and phosphoenolpyruvate: step 6/7.</text>
</comment>
<comment type="subunit">
    <text evidence="1">Monomer.</text>
</comment>
<comment type="subcellular location">
    <subcellularLocation>
        <location evidence="1">Cytoplasm</location>
    </subcellularLocation>
</comment>
<comment type="miscellaneous">
    <text>Resistant to the antibiotic glyphosate.</text>
</comment>
<comment type="similarity">
    <text evidence="1 3">Belongs to the EPSP synthase family.</text>
</comment>
<name>AROA_PSES2</name>
<accession>P0A2Y4</accession>
<accession>P56952</accession>
<reference key="1">
    <citation type="patent" date="1997-05-27" number="US5633435">
        <title>Glyphosate-tolerant 5-enolpyruvylshikimate-3-phosphate synthases.</title>
        <authorList>
            <person name="Barry G.F."/>
            <person name="Kishore G.M."/>
            <person name="Padgette S.R."/>
            <person name="Stallings W.C."/>
        </authorList>
    </citation>
    <scope>NUCLEOTIDE SEQUENCE [GENOMIC DNA]</scope>
    <scope>PROTEIN SEQUENCE OF 2-16</scope>
</reference>
<keyword id="KW-0028">Amino-acid biosynthesis</keyword>
<keyword id="KW-0057">Aromatic amino acid biosynthesis</keyword>
<keyword id="KW-0963">Cytoplasm</keyword>
<keyword id="KW-0903">Direct protein sequencing</keyword>
<keyword id="KW-0359">Herbicide resistance</keyword>
<keyword id="KW-0808">Transferase</keyword>
<evidence type="ECO:0000255" key="1">
    <source>
        <dbReference type="HAMAP-Rule" id="MF_00210"/>
    </source>
</evidence>
<evidence type="ECO:0000256" key="2">
    <source>
        <dbReference type="SAM" id="MobiDB-lite"/>
    </source>
</evidence>
<evidence type="ECO:0000305" key="3"/>
<protein>
    <recommendedName>
        <fullName evidence="1">3-phosphoshikimate 1-carboxyvinyltransferase</fullName>
        <ecNumber evidence="1">2.5.1.19</ecNumber>
    </recommendedName>
    <alternativeName>
        <fullName evidence="1">5-enolpyruvylshikimate-3-phosphate synthase</fullName>
        <shortName evidence="1">EPSP synthase</shortName>
        <shortName evidence="1">EPSPS</shortName>
    </alternativeName>
</protein>
<dbReference type="EC" id="2.5.1.19" evidence="1"/>
<dbReference type="SMR" id="P0A2Y4"/>
<dbReference type="UniPathway" id="UPA00053">
    <property type="reaction ID" value="UER00089"/>
</dbReference>
<dbReference type="GO" id="GO:0005737">
    <property type="term" value="C:cytoplasm"/>
    <property type="evidence" value="ECO:0007669"/>
    <property type="project" value="UniProtKB-SubCell"/>
</dbReference>
<dbReference type="GO" id="GO:0003866">
    <property type="term" value="F:3-phosphoshikimate 1-carboxyvinyltransferase activity"/>
    <property type="evidence" value="ECO:0007669"/>
    <property type="project" value="UniProtKB-UniRule"/>
</dbReference>
<dbReference type="GO" id="GO:0008652">
    <property type="term" value="P:amino acid biosynthetic process"/>
    <property type="evidence" value="ECO:0007669"/>
    <property type="project" value="UniProtKB-KW"/>
</dbReference>
<dbReference type="GO" id="GO:0009073">
    <property type="term" value="P:aromatic amino acid family biosynthetic process"/>
    <property type="evidence" value="ECO:0007669"/>
    <property type="project" value="UniProtKB-KW"/>
</dbReference>
<dbReference type="GO" id="GO:0009423">
    <property type="term" value="P:chorismate biosynthetic process"/>
    <property type="evidence" value="ECO:0007669"/>
    <property type="project" value="UniProtKB-UniRule"/>
</dbReference>
<dbReference type="GO" id="GO:0009635">
    <property type="term" value="P:response to herbicide"/>
    <property type="evidence" value="ECO:0007669"/>
    <property type="project" value="UniProtKB-KW"/>
</dbReference>
<dbReference type="CDD" id="cd01556">
    <property type="entry name" value="EPSP_synthase"/>
    <property type="match status" value="1"/>
</dbReference>
<dbReference type="FunFam" id="3.65.10.10:FF:000005">
    <property type="entry name" value="3-phosphoshikimate 1-carboxyvinyltransferase"/>
    <property type="match status" value="1"/>
</dbReference>
<dbReference type="FunFam" id="3.65.10.10:FF:000006">
    <property type="entry name" value="3-phosphoshikimate 1-carboxyvinyltransferase"/>
    <property type="match status" value="1"/>
</dbReference>
<dbReference type="Gene3D" id="3.65.10.10">
    <property type="entry name" value="Enolpyruvate transferase domain"/>
    <property type="match status" value="2"/>
</dbReference>
<dbReference type="HAMAP" id="MF_00210">
    <property type="entry name" value="EPSP_synth"/>
    <property type="match status" value="1"/>
</dbReference>
<dbReference type="InterPro" id="IPR001986">
    <property type="entry name" value="Enolpyruvate_Tfrase_dom"/>
</dbReference>
<dbReference type="InterPro" id="IPR036968">
    <property type="entry name" value="Enolpyruvate_Tfrase_sf"/>
</dbReference>
<dbReference type="InterPro" id="IPR006264">
    <property type="entry name" value="EPSP_synthase"/>
</dbReference>
<dbReference type="InterPro" id="IPR023193">
    <property type="entry name" value="EPSP_synthase_CS"/>
</dbReference>
<dbReference type="InterPro" id="IPR013792">
    <property type="entry name" value="RNA3'P_cycl/enolpyr_Trfase_a/b"/>
</dbReference>
<dbReference type="NCBIfam" id="TIGR01356">
    <property type="entry name" value="aroA"/>
    <property type="match status" value="1"/>
</dbReference>
<dbReference type="PANTHER" id="PTHR21090">
    <property type="entry name" value="AROM/DEHYDROQUINATE SYNTHASE"/>
    <property type="match status" value="1"/>
</dbReference>
<dbReference type="PANTHER" id="PTHR21090:SF5">
    <property type="entry name" value="PENTAFUNCTIONAL AROM POLYPEPTIDE"/>
    <property type="match status" value="1"/>
</dbReference>
<dbReference type="Pfam" id="PF00275">
    <property type="entry name" value="EPSP_synthase"/>
    <property type="match status" value="1"/>
</dbReference>
<dbReference type="PIRSF" id="PIRSF000505">
    <property type="entry name" value="EPSPS"/>
    <property type="match status" value="1"/>
</dbReference>
<dbReference type="SUPFAM" id="SSF55205">
    <property type="entry name" value="EPT/RTPC-like"/>
    <property type="match status" value="1"/>
</dbReference>
<dbReference type="PROSITE" id="PS00104">
    <property type="entry name" value="EPSP_SYNTHASE_1"/>
    <property type="match status" value="1"/>
</dbReference>
<dbReference type="PROSITE" id="PS00885">
    <property type="entry name" value="EPSP_SYNTHASE_2"/>
    <property type="match status" value="1"/>
</dbReference>
<feature type="chain" id="PRO_0000088280" description="3-phosphoshikimate 1-carboxyvinyltransferase">
    <location>
        <begin position="1"/>
        <end position="449"/>
    </location>
</feature>
<feature type="region of interest" description="Disordered" evidence="2">
    <location>
        <begin position="1"/>
        <end position="23"/>
    </location>
</feature>
<feature type="active site" description="Proton acceptor" evidence="1">
    <location>
        <position position="326"/>
    </location>
</feature>
<feature type="binding site" evidence="1">
    <location>
        <position position="28"/>
    </location>
    <ligand>
        <name>3-phosphoshikimate</name>
        <dbReference type="ChEBI" id="CHEBI:145989"/>
    </ligand>
</feature>
<feature type="binding site" evidence="1">
    <location>
        <position position="28"/>
    </location>
    <ligand>
        <name>phosphoenolpyruvate</name>
        <dbReference type="ChEBI" id="CHEBI:58702"/>
    </ligand>
</feature>
<feature type="binding site" evidence="1">
    <location>
        <position position="29"/>
    </location>
    <ligand>
        <name>3-phosphoshikimate</name>
        <dbReference type="ChEBI" id="CHEBI:145989"/>
    </ligand>
</feature>
<feature type="binding site" evidence="1">
    <location>
        <position position="33"/>
    </location>
    <ligand>
        <name>3-phosphoshikimate</name>
        <dbReference type="ChEBI" id="CHEBI:145989"/>
    </ligand>
</feature>
<feature type="binding site" evidence="1">
    <location>
        <position position="100"/>
    </location>
    <ligand>
        <name>phosphoenolpyruvate</name>
        <dbReference type="ChEBI" id="CHEBI:58702"/>
    </ligand>
</feature>
<feature type="binding site" evidence="1">
    <location>
        <position position="128"/>
    </location>
    <ligand>
        <name>phosphoenolpyruvate</name>
        <dbReference type="ChEBI" id="CHEBI:58702"/>
    </ligand>
</feature>
<feature type="binding site" evidence="1">
    <location>
        <position position="173"/>
    </location>
    <ligand>
        <name>3-phosphoshikimate</name>
        <dbReference type="ChEBI" id="CHEBI:145989"/>
    </ligand>
</feature>
<feature type="binding site" evidence="1">
    <location>
        <position position="175"/>
    </location>
    <ligand>
        <name>3-phosphoshikimate</name>
        <dbReference type="ChEBI" id="CHEBI:145989"/>
    </ligand>
</feature>
<feature type="binding site" evidence="1">
    <location>
        <position position="175"/>
    </location>
    <ligand>
        <name>phosphoenolpyruvate</name>
        <dbReference type="ChEBI" id="CHEBI:58702"/>
    </ligand>
</feature>
<feature type="binding site" evidence="1">
    <location>
        <position position="326"/>
    </location>
    <ligand>
        <name>3-phosphoshikimate</name>
        <dbReference type="ChEBI" id="CHEBI:145989"/>
    </ligand>
</feature>
<feature type="binding site" evidence="1">
    <location>
        <position position="353"/>
    </location>
    <ligand>
        <name>3-phosphoshikimate</name>
        <dbReference type="ChEBI" id="CHEBI:145989"/>
    </ligand>
</feature>
<feature type="binding site" evidence="1">
    <location>
        <position position="357"/>
    </location>
    <ligand>
        <name>phosphoenolpyruvate</name>
        <dbReference type="ChEBI" id="CHEBI:58702"/>
    </ligand>
</feature>
<feature type="binding site" evidence="1">
    <location>
        <position position="402"/>
    </location>
    <ligand>
        <name>phosphoenolpyruvate</name>
        <dbReference type="ChEBI" id="CHEBI:58702"/>
    </ligand>
</feature>
<gene>
    <name evidence="1" type="primary">aroA</name>
</gene>